<protein>
    <recommendedName>
        <fullName evidence="1">Deoxyuridine 5'-triphosphate nucleotidohydrolase</fullName>
        <shortName evidence="1">dUTPase</shortName>
        <ecNumber evidence="1">3.6.1.23</ecNumber>
    </recommendedName>
    <alternativeName>
        <fullName evidence="1">dUTP pyrophosphatase</fullName>
    </alternativeName>
</protein>
<comment type="function">
    <text evidence="1">Involved in nucleotide metabolism: produces dUMP, the immediate precursor of thymidine nucleotides and decreases the intracellular concentration of dUTP to avoid uracil incorporation into viral DNA.</text>
</comment>
<comment type="catalytic activity">
    <reaction evidence="1">
        <text>dUTP + H2O = dUMP + diphosphate + H(+)</text>
        <dbReference type="Rhea" id="RHEA:10248"/>
        <dbReference type="ChEBI" id="CHEBI:15377"/>
        <dbReference type="ChEBI" id="CHEBI:15378"/>
        <dbReference type="ChEBI" id="CHEBI:33019"/>
        <dbReference type="ChEBI" id="CHEBI:61555"/>
        <dbReference type="ChEBI" id="CHEBI:246422"/>
        <dbReference type="EC" id="3.6.1.23"/>
    </reaction>
</comment>
<comment type="cofactor">
    <cofactor evidence="1">
        <name>Mg(2+)</name>
        <dbReference type="ChEBI" id="CHEBI:18420"/>
    </cofactor>
</comment>
<comment type="similarity">
    <text evidence="1">Belongs to the dUTPase family.</text>
</comment>
<accession>Q9E6M6</accession>
<organism>
    <name type="scientific">Gallid herpesvirus 2 (strain Chicken/Md5/ATCC VR-987)</name>
    <name type="common">GaHV-2</name>
    <name type="synonym">Marek's disease herpesvirus type 1</name>
    <dbReference type="NCBI Taxonomy" id="10389"/>
    <lineage>
        <taxon>Viruses</taxon>
        <taxon>Duplodnaviria</taxon>
        <taxon>Heunggongvirae</taxon>
        <taxon>Peploviricota</taxon>
        <taxon>Herviviricetes</taxon>
        <taxon>Herpesvirales</taxon>
        <taxon>Orthoherpesviridae</taxon>
        <taxon>Alphaherpesvirinae</taxon>
        <taxon>Mardivirus</taxon>
        <taxon>Mardivirus gallidalpha2</taxon>
        <taxon>Gallid alphaherpesvirus 2</taxon>
    </lineage>
</organism>
<keyword id="KW-0378">Hydrolase</keyword>
<keyword id="KW-0460">Magnesium</keyword>
<keyword id="KW-0479">Metal-binding</keyword>
<keyword id="KW-0546">Nucleotide metabolism</keyword>
<keyword id="KW-1185">Reference proteome</keyword>
<dbReference type="EC" id="3.6.1.23" evidence="1"/>
<dbReference type="EMBL" id="AF243438">
    <property type="protein sequence ID" value="AAG14243.1"/>
    <property type="molecule type" value="Genomic_DNA"/>
</dbReference>
<dbReference type="RefSeq" id="YP_001033980.1">
    <property type="nucleotide sequence ID" value="NC_002229.3"/>
</dbReference>
<dbReference type="GeneID" id="4811526"/>
<dbReference type="KEGG" id="vg:4811526"/>
<dbReference type="Proteomes" id="UP000008072">
    <property type="component" value="Segment"/>
</dbReference>
<dbReference type="GO" id="GO:0004170">
    <property type="term" value="F:dUTP diphosphatase activity"/>
    <property type="evidence" value="ECO:0007669"/>
    <property type="project" value="UniProtKB-EC"/>
</dbReference>
<dbReference type="GO" id="GO:0046872">
    <property type="term" value="F:metal ion binding"/>
    <property type="evidence" value="ECO:0007669"/>
    <property type="project" value="UniProtKB-KW"/>
</dbReference>
<dbReference type="GO" id="GO:0046080">
    <property type="term" value="P:dUTP metabolic process"/>
    <property type="evidence" value="ECO:0007669"/>
    <property type="project" value="InterPro"/>
</dbReference>
<dbReference type="Gene3D" id="2.70.40.10">
    <property type="match status" value="2"/>
</dbReference>
<dbReference type="HAMAP" id="MF_04031">
    <property type="entry name" value="HSV_DUT"/>
    <property type="match status" value="1"/>
</dbReference>
<dbReference type="InterPro" id="IPR029054">
    <property type="entry name" value="dUTPase-like"/>
</dbReference>
<dbReference type="InterPro" id="IPR036157">
    <property type="entry name" value="dUTPase-like_sf"/>
</dbReference>
<dbReference type="InterPro" id="IPR034745">
    <property type="entry name" value="HSV_DUT"/>
</dbReference>
<dbReference type="Pfam" id="PF00692">
    <property type="entry name" value="dUTPase"/>
    <property type="match status" value="1"/>
</dbReference>
<dbReference type="SUPFAM" id="SSF51283">
    <property type="entry name" value="dUTPase-like"/>
    <property type="match status" value="2"/>
</dbReference>
<sequence length="436" mass="48468">MNVHESHPRRDRDLENITLEALTVPWRLQFRVDEALYAVNPNGWTCYIEERDQRCLRVTNNCVISLLKSDLKRRYQTCTLNIGIRVAVPQNYVVILAKLTDPDPTSRGIPIIQVANGLIDSGYRGSIRAVLFFEKSCIIPKNGLAIRLSLVKLASPNLNTRVLFNLSDITPHLECGPDFSTSIETAVRLGSGETKPLLPPSGGGIWAGTGCRALACLYNDRVCKASHYTSSDKNIAFVVRYNDSTSVLGLKDFPTAEDETFVRFYTSGQFATLIPFFETFTPKRTEDAAYDIAAPGDIRLGALSSTTIMIQQRYVCMDDSVIPCIFGRSSMNLRGLIIIPSRWLPNSWLTITICNLTEMTVMIRCGDRIAQLLLVDHESATLIPPTNDTTGMFPTVGKCRRPGASVGEPKWRETLEFDTEAYSSERQFSGFGSTGI</sequence>
<evidence type="ECO:0000255" key="1">
    <source>
        <dbReference type="HAMAP-Rule" id="MF_04031"/>
    </source>
</evidence>
<reference key="1">
    <citation type="journal article" date="2000" name="J. Virol.">
        <title>The genome of a very virulent Marek's disease virus.</title>
        <authorList>
            <person name="Tulman E.R."/>
            <person name="Afonso C.L."/>
            <person name="Lu Z."/>
            <person name="Zsak L."/>
            <person name="Rock D.L."/>
            <person name="Kutish G.F."/>
        </authorList>
    </citation>
    <scope>NUCLEOTIDE SEQUENCE [LARGE SCALE GENOMIC DNA]</scope>
</reference>
<proteinExistence type="inferred from homology"/>
<organismHost>
    <name type="scientific">Gallus gallus</name>
    <name type="common">Chicken</name>
    <dbReference type="NCBI Taxonomy" id="9031"/>
</organismHost>
<feature type="chain" id="PRO_0000406499" description="Deoxyuridine 5'-triphosphate nucleotidohydrolase">
    <location>
        <begin position="1"/>
        <end position="436"/>
    </location>
</feature>
<feature type="binding site" evidence="1">
    <location>
        <begin position="328"/>
        <end position="330"/>
    </location>
    <ligand>
        <name>substrate</name>
    </ligand>
</feature>
<feature type="binding site" evidence="1">
    <location>
        <begin position="431"/>
        <end position="432"/>
    </location>
    <ligand>
        <name>substrate</name>
    </ligand>
</feature>
<gene>
    <name evidence="1" type="primary">DUT</name>
    <name type="ordered locus">MDV063</name>
</gene>
<name>DUT_GAHVM</name>